<sequence length="205" mass="23449">MAAPGERGRFHGGNLFFLPGGARSEMMDDLATDARGRGAGRRDAAASASTPAQAPTSDSPVAEDASRRRPCRACVDFKTWMRTQQKRDTKFREDCPPDREELGRHSWAVLHTLAAYYPDLPTPEQQQDMAQFIHLFSKFYPCEECAEDLRKRLCRNHPDTRTRACFTQWLCHLHNEVNRKLGKPDFDCSKVDERWRDGWKDGSCD</sequence>
<gene>
    <name type="primary">GFER</name>
    <name type="synonym">ALR</name>
    <name type="synonym">HERV1</name>
    <name type="synonym">HPO</name>
</gene>
<name>ALR_HUMAN</name>
<protein>
    <recommendedName>
        <fullName>FAD-linked sulfhydryl oxidase ALR</fullName>
        <ecNumber>1.8.3.2</ecNumber>
    </recommendedName>
    <alternativeName>
        <fullName>Augmenter of liver regeneration</fullName>
        <shortName>hERV1</shortName>
    </alternativeName>
    <alternativeName>
        <fullName>Hepatopoietin</fullName>
    </alternativeName>
</protein>
<feature type="chain" id="PRO_0000208548" description="FAD-linked sulfhydryl oxidase ALR">
    <location>
        <begin position="1"/>
        <end position="205"/>
    </location>
</feature>
<feature type="domain" description="ERV/ALR sulfhydryl oxidase" evidence="1">
    <location>
        <begin position="95"/>
        <end position="195"/>
    </location>
</feature>
<feature type="region of interest" description="Disordered" evidence="2">
    <location>
        <begin position="1"/>
        <end position="65"/>
    </location>
</feature>
<feature type="compositionally biased region" description="Basic and acidic residues" evidence="2">
    <location>
        <begin position="32"/>
        <end position="44"/>
    </location>
</feature>
<feature type="compositionally biased region" description="Low complexity" evidence="2">
    <location>
        <begin position="45"/>
        <end position="60"/>
    </location>
</feature>
<feature type="binding site" evidence="7">
    <location>
        <begin position="99"/>
        <end position="107"/>
    </location>
    <ligand>
        <name>FAD</name>
        <dbReference type="ChEBI" id="CHEBI:57692"/>
    </ligand>
</feature>
<feature type="binding site" evidence="7">
    <location>
        <position position="111"/>
    </location>
    <ligand>
        <name>FAD</name>
        <dbReference type="ChEBI" id="CHEBI:57692"/>
    </ligand>
</feature>
<feature type="binding site" evidence="7">
    <location>
        <position position="140"/>
    </location>
    <ligand>
        <name>FAD</name>
        <dbReference type="ChEBI" id="CHEBI:57692"/>
    </ligand>
</feature>
<feature type="binding site" evidence="7">
    <location>
        <begin position="171"/>
        <end position="183"/>
    </location>
    <ligand>
        <name>FAD</name>
        <dbReference type="ChEBI" id="CHEBI:57692"/>
    </ligand>
</feature>
<feature type="binding site" evidence="7">
    <location>
        <begin position="194"/>
        <end position="195"/>
    </location>
    <ligand>
        <name>FAD</name>
        <dbReference type="ChEBI" id="CHEBI:57692"/>
    </ligand>
</feature>
<feature type="modified residue" description="Phosphoserine" evidence="14">
    <location>
        <position position="59"/>
    </location>
</feature>
<feature type="disulfide bond" description="Interchain (with C-204)">
    <location>
        <position position="95"/>
    </location>
</feature>
<feature type="disulfide bond" description="Redox-active">
    <location>
        <begin position="142"/>
        <end position="145"/>
    </location>
</feature>
<feature type="disulfide bond">
    <location>
        <begin position="171"/>
        <end position="188"/>
    </location>
</feature>
<feature type="disulfide bond" description="Interchain (with C-95)">
    <location>
        <position position="204"/>
    </location>
</feature>
<feature type="splice variant" id="VSP_040393" description="In isoform 2." evidence="11 12">
    <location>
        <begin position="1"/>
        <end position="80"/>
    </location>
</feature>
<feature type="sequence variant" id="VAR_061994" description="In dbSNP:rs36041021.">
    <original>F</original>
    <variation>L</variation>
    <location>
        <position position="166"/>
    </location>
</feature>
<feature type="sequence variant" id="VAR_063435" description="In MPMCD; less stable than the wild-type protein within the mitochondria, increased rate of dissociation of FAD by about 45-fold; dbSNP:rs121908192." evidence="5 6">
    <original>R</original>
    <variation>H</variation>
    <location>
        <position position="194"/>
    </location>
</feature>
<feature type="sequence conflict" description="In Ref. 7; AAA96390." evidence="13" ref="7">
    <original>L</original>
    <variation>S</variation>
    <location>
        <position position="30"/>
    </location>
</feature>
<feature type="sequence conflict" description="In Ref. 3; AAG38105." evidence="13" ref="3">
    <original>Q</original>
    <variation>R</variation>
    <location>
        <position position="127"/>
    </location>
</feature>
<feature type="sequence conflict" description="In Ref. 3; AAG38105." evidence="13" ref="3">
    <original>K</original>
    <variation>E</variation>
    <location>
        <position position="180"/>
    </location>
</feature>
<feature type="helix" evidence="15">
    <location>
        <begin position="86"/>
        <end position="88"/>
    </location>
</feature>
<feature type="strand" evidence="15">
    <location>
        <begin position="93"/>
        <end position="95"/>
    </location>
</feature>
<feature type="helix" evidence="15">
    <location>
        <begin position="99"/>
        <end position="115"/>
    </location>
</feature>
<feature type="helix" evidence="15">
    <location>
        <begin position="123"/>
        <end position="139"/>
    </location>
</feature>
<feature type="helix" evidence="15">
    <location>
        <begin position="143"/>
        <end position="155"/>
    </location>
</feature>
<feature type="helix" evidence="15">
    <location>
        <begin position="163"/>
        <end position="180"/>
    </location>
</feature>
<feature type="helix" evidence="15">
    <location>
        <begin position="188"/>
        <end position="190"/>
    </location>
</feature>
<feature type="helix" evidence="15">
    <location>
        <begin position="191"/>
        <end position="195"/>
    </location>
</feature>
<comment type="function">
    <molecule>Isoform 1</molecule>
    <text evidence="4 6 7 8 9 10">FAD-dependent sulfhydryl oxidase that regenerates the redox-active disulfide bonds in CHCHD4/MIA40, a chaperone essential for disulfide bond formation and protein folding in the mitochondrial intermembrane space. The reduced form of CHCHD4/MIA40 forms a transient intermolecular disulfide bridge with GFER/ERV1, resulting in regeneration of the essential disulfide bonds in CHCHD4/MIA40, while GFER/ERV1 becomes re-oxidized by donating electrons to cytochrome c or molecular oxygen.</text>
</comment>
<comment type="function">
    <molecule>Isoform 2</molecule>
    <text>May act as an autocrine hepatotrophic growth factor promoting liver regeneration.</text>
</comment>
<comment type="catalytic activity">
    <reaction evidence="6 8">
        <text>2 R'C(R)SH + O2 = R'C(R)S-S(R)CR' + H2O2</text>
        <dbReference type="Rhea" id="RHEA:17357"/>
        <dbReference type="ChEBI" id="CHEBI:15379"/>
        <dbReference type="ChEBI" id="CHEBI:16240"/>
        <dbReference type="ChEBI" id="CHEBI:16520"/>
        <dbReference type="ChEBI" id="CHEBI:17412"/>
        <dbReference type="EC" id="1.8.3.2"/>
    </reaction>
</comment>
<comment type="cofactor">
    <cofactor evidence="1 6 7">
        <name>FAD</name>
        <dbReference type="ChEBI" id="CHEBI:57692"/>
    </cofactor>
</comment>
<comment type="subunit">
    <text evidence="3 6 7 8 10">Homodimer; disulfide-linked. May form heterodimers of isoform 1 and isoform 2 (PubMed:12180965, PubMed:20593814, PubMed:21383138, PubMed:22224850). Interacts with CHCHD4/MIA40 (PubMed:21383138, PubMed:23676665).</text>
</comment>
<comment type="interaction">
    <interactant intactId="EBI-718281">
        <id>P55789</id>
    </interactant>
    <interactant intactId="EBI-742388">
        <id>Q9H8W4</id>
        <label>PLEKHF2</label>
    </interactant>
    <organismsDiffer>false</organismsDiffer>
    <experiments>3</experiments>
</comment>
<comment type="interaction">
    <interactant intactId="EBI-718281">
        <id>P55789</id>
    </interactant>
    <interactant intactId="EBI-25475880">
        <id>PRO_0000449628</id>
        <label>rep</label>
        <dbReference type="UniProtKB" id="P0DTD1"/>
    </interactant>
    <organismsDiffer>true</organismsDiffer>
    <experiments>3</experiments>
</comment>
<comment type="subcellular location">
    <molecule>Isoform 1</molecule>
    <subcellularLocation>
        <location>Mitochondrion intermembrane space</location>
    </subcellularLocation>
    <subcellularLocation>
        <location evidence="10">Mitochondrion</location>
    </subcellularLocation>
</comment>
<comment type="subcellular location">
    <molecule>Isoform 2</molecule>
    <subcellularLocation>
        <location>Cytoplasm</location>
    </subcellularLocation>
    <subcellularLocation>
        <location>Secreted</location>
    </subcellularLocation>
</comment>
<comment type="alternative products">
    <event type="alternative splicing"/>
    <isoform>
        <id>P55789-1</id>
        <name>1</name>
        <name>HPO-205</name>
        <name>lfALR</name>
        <sequence type="displayed"/>
    </isoform>
    <isoform>
        <id>P55789-2</id>
        <name>2</name>
        <name>HPO-125</name>
        <name>sfALR</name>
        <sequence type="described" ref="VSP_040393"/>
    </isoform>
</comment>
<comment type="tissue specificity">
    <text evidence="5">Ubiquitously expressed. Highest expression in the testis and liver and low expression in the muscle.</text>
</comment>
<comment type="disease" evidence="5 6">
    <disease id="DI-02638">
        <name>Myopathy, mitochondrial progressive, with congenital cataract, hearing loss and developmental delay</name>
        <acronym>MPMCD</acronym>
        <description>A disease characterized by progressive myopathy and partial combined respiratory-chain deficiency, congenital cataract, sensorineural hearing loss, and developmental delay.</description>
        <dbReference type="MIM" id="613076"/>
    </disease>
    <text>The disease is caused by variants affecting the gene represented in this entry.</text>
</comment>
<comment type="sequence caution" evidence="13">
    <conflict type="frameshift">
        <sequence resource="EMBL-CDS" id="AAA96390"/>
    </conflict>
</comment>
<comment type="sequence caution" evidence="13">
    <conflict type="erroneous initiation">
        <sequence resource="EMBL-CDS" id="AAD36986"/>
    </conflict>
    <text>Truncated N-terminus.</text>
</comment>
<comment type="sequence caution" evidence="13">
    <conflict type="erroneous initiation">
        <sequence resource="EMBL-CDS" id="AAD56538"/>
    </conflict>
    <text>Truncated N-terminus.</text>
</comment>
<comment type="sequence caution" evidence="13">
    <conflict type="erroneous initiation">
        <sequence resource="EMBL-CDS" id="AAH02429"/>
    </conflict>
    <text>Truncated N-terminus.</text>
</comment>
<comment type="sequence caution" evidence="13">
    <conflict type="erroneous initiation">
        <sequence resource="EMBL-CDS" id="AAH28348"/>
    </conflict>
    <text>Truncated N-terminus.</text>
</comment>
<dbReference type="EC" id="1.8.3.2"/>
<dbReference type="EMBL" id="AF183892">
    <property type="protein sequence ID" value="AAD56538.1"/>
    <property type="status" value="ALT_INIT"/>
    <property type="molecule type" value="Genomic_DNA"/>
</dbReference>
<dbReference type="EMBL" id="AF124604">
    <property type="protein sequence ID" value="AAD17328.1"/>
    <property type="molecule type" value="mRNA"/>
</dbReference>
<dbReference type="EMBL" id="AF306863">
    <property type="protein sequence ID" value="AAG38105.1"/>
    <property type="molecule type" value="mRNA"/>
</dbReference>
<dbReference type="EMBL" id="AY550027">
    <property type="protein sequence ID" value="AAS55642.1"/>
    <property type="molecule type" value="mRNA"/>
</dbReference>
<dbReference type="EMBL" id="AC005606">
    <property type="status" value="NOT_ANNOTATED_CDS"/>
    <property type="molecule type" value="Genomic_DNA"/>
</dbReference>
<dbReference type="EMBL" id="BC002429">
    <property type="protein sequence ID" value="AAH02429.1"/>
    <property type="status" value="ALT_INIT"/>
    <property type="molecule type" value="mRNA"/>
</dbReference>
<dbReference type="EMBL" id="BC028348">
    <property type="protein sequence ID" value="AAH28348.2"/>
    <property type="status" value="ALT_INIT"/>
    <property type="molecule type" value="mRNA"/>
</dbReference>
<dbReference type="EMBL" id="AF146394">
    <property type="protein sequence ID" value="AAD36986.1"/>
    <property type="status" value="ALT_INIT"/>
    <property type="molecule type" value="Genomic_DNA"/>
</dbReference>
<dbReference type="EMBL" id="U31176">
    <property type="protein sequence ID" value="AAA96390.2"/>
    <property type="status" value="ALT_FRAME"/>
    <property type="molecule type" value="mRNA"/>
</dbReference>
<dbReference type="CCDS" id="CCDS32368.1">
    <molecule id="P55789-1"/>
</dbReference>
<dbReference type="RefSeq" id="NP_005253.3">
    <molecule id="P55789-1"/>
    <property type="nucleotide sequence ID" value="NM_005262.2"/>
</dbReference>
<dbReference type="PDB" id="3MBG">
    <property type="method" value="X-ray"/>
    <property type="resolution" value="1.85 A"/>
    <property type="chains" value="A/B/C=81-205"/>
</dbReference>
<dbReference type="PDB" id="3O55">
    <property type="method" value="X-ray"/>
    <property type="resolution" value="1.90 A"/>
    <property type="chains" value="A=81-205"/>
</dbReference>
<dbReference type="PDB" id="3TK0">
    <property type="method" value="X-ray"/>
    <property type="resolution" value="1.61 A"/>
    <property type="chains" value="A=81-205"/>
</dbReference>
<dbReference type="PDB" id="3U2L">
    <property type="method" value="X-ray"/>
    <property type="resolution" value="1.95 A"/>
    <property type="chains" value="A=91-205"/>
</dbReference>
<dbReference type="PDB" id="3U2M">
    <property type="method" value="X-ray"/>
    <property type="resolution" value="2.00 A"/>
    <property type="chains" value="A=91-205"/>
</dbReference>
<dbReference type="PDB" id="3U5S">
    <property type="method" value="X-ray"/>
    <property type="resolution" value="1.50 A"/>
    <property type="chains" value="A=82-203"/>
</dbReference>
<dbReference type="PDB" id="4LDK">
    <property type="method" value="X-ray"/>
    <property type="resolution" value="2.04 A"/>
    <property type="chains" value="A=81-205"/>
</dbReference>
<dbReference type="PDBsum" id="3MBG"/>
<dbReference type="PDBsum" id="3O55"/>
<dbReference type="PDBsum" id="3TK0"/>
<dbReference type="PDBsum" id="3U2L"/>
<dbReference type="PDBsum" id="3U2M"/>
<dbReference type="PDBsum" id="3U5S"/>
<dbReference type="PDBsum" id="4LDK"/>
<dbReference type="BMRB" id="P55789"/>
<dbReference type="SMR" id="P55789"/>
<dbReference type="BioGRID" id="108939">
    <property type="interactions" value="97"/>
</dbReference>
<dbReference type="CORUM" id="P55789"/>
<dbReference type="FunCoup" id="P55789">
    <property type="interactions" value="2041"/>
</dbReference>
<dbReference type="IntAct" id="P55789">
    <property type="interactions" value="56"/>
</dbReference>
<dbReference type="MINT" id="P55789"/>
<dbReference type="STRING" id="9606.ENSP00000248114"/>
<dbReference type="ChEMBL" id="CHEMBL1741189"/>
<dbReference type="DrugBank" id="DB03147">
    <property type="generic name" value="Flavin adenine dinucleotide"/>
</dbReference>
<dbReference type="DrugCentral" id="P55789"/>
<dbReference type="GlyGen" id="P55789">
    <property type="glycosylation" value="2 sites, 1 O-linked glycan (1 site)"/>
</dbReference>
<dbReference type="iPTMnet" id="P55789"/>
<dbReference type="MetOSite" id="P55789"/>
<dbReference type="PhosphoSitePlus" id="P55789"/>
<dbReference type="SwissPalm" id="P55789"/>
<dbReference type="BioMuta" id="GFER"/>
<dbReference type="DMDM" id="218511915"/>
<dbReference type="jPOST" id="P55789"/>
<dbReference type="MassIVE" id="P55789"/>
<dbReference type="PaxDb" id="9606-ENSP00000248114"/>
<dbReference type="PeptideAtlas" id="P55789"/>
<dbReference type="ProteomicsDB" id="56865">
    <molecule id="P55789-1"/>
</dbReference>
<dbReference type="ProteomicsDB" id="56866">
    <molecule id="P55789-2"/>
</dbReference>
<dbReference type="Pumba" id="P55789"/>
<dbReference type="Antibodypedia" id="42516">
    <property type="antibodies" value="260 antibodies from 31 providers"/>
</dbReference>
<dbReference type="DNASU" id="2671"/>
<dbReference type="Ensembl" id="ENST00000248114.7">
    <molecule id="P55789-1"/>
    <property type="protein sequence ID" value="ENSP00000248114.6"/>
    <property type="gene ID" value="ENSG00000127554.13"/>
</dbReference>
<dbReference type="Ensembl" id="ENST00000709288.1">
    <molecule id="P55789-1"/>
    <property type="protein sequence ID" value="ENSP00000517599.1"/>
    <property type="gene ID" value="ENSG00000291944.1"/>
</dbReference>
<dbReference type="GeneID" id="2671"/>
<dbReference type="KEGG" id="hsa:2671"/>
<dbReference type="MANE-Select" id="ENST00000248114.7">
    <property type="protein sequence ID" value="ENSP00000248114.6"/>
    <property type="RefSeq nucleotide sequence ID" value="NM_005262.3"/>
    <property type="RefSeq protein sequence ID" value="NP_005253.3"/>
</dbReference>
<dbReference type="UCSC" id="uc002cob.4">
    <molecule id="P55789-1"/>
    <property type="organism name" value="human"/>
</dbReference>
<dbReference type="AGR" id="HGNC:4236"/>
<dbReference type="CTD" id="2671"/>
<dbReference type="DisGeNET" id="2671"/>
<dbReference type="GeneCards" id="GFER"/>
<dbReference type="HGNC" id="HGNC:4236">
    <property type="gene designation" value="GFER"/>
</dbReference>
<dbReference type="HPA" id="ENSG00000127554">
    <property type="expression patterns" value="Low tissue specificity"/>
</dbReference>
<dbReference type="MalaCards" id="GFER"/>
<dbReference type="MIM" id="600924">
    <property type="type" value="gene"/>
</dbReference>
<dbReference type="MIM" id="613076">
    <property type="type" value="phenotype"/>
</dbReference>
<dbReference type="neXtProt" id="NX_P55789"/>
<dbReference type="OpenTargets" id="ENSG00000127554"/>
<dbReference type="Orphanet" id="330054">
    <property type="disease" value="Congenital cataract-progressive muscular hypotonia-hearing loss-developmental delay syndrome"/>
</dbReference>
<dbReference type="PharmGKB" id="PA28648"/>
<dbReference type="VEuPathDB" id="HostDB:ENSG00000127554"/>
<dbReference type="eggNOG" id="KOG3355">
    <property type="taxonomic scope" value="Eukaryota"/>
</dbReference>
<dbReference type="GeneTree" id="ENSGT00390000001979"/>
<dbReference type="HOGENOM" id="CLU_070631_1_1_1"/>
<dbReference type="InParanoid" id="P55789"/>
<dbReference type="OMA" id="TWMCEAH"/>
<dbReference type="OrthoDB" id="17199at2759"/>
<dbReference type="PAN-GO" id="P55789">
    <property type="GO annotations" value="4 GO annotations based on evolutionary models"/>
</dbReference>
<dbReference type="PhylomeDB" id="P55789"/>
<dbReference type="TreeFam" id="TF105271"/>
<dbReference type="BRENDA" id="1.8.3.2">
    <property type="organism ID" value="2681"/>
</dbReference>
<dbReference type="PathwayCommons" id="P55789"/>
<dbReference type="Reactome" id="R-HSA-1268020">
    <property type="pathway name" value="Mitochondrial protein import"/>
</dbReference>
<dbReference type="SignaLink" id="P55789"/>
<dbReference type="SIGNOR" id="P55789"/>
<dbReference type="BioGRID-ORCS" id="2671">
    <property type="hits" value="591 hits in 1188 CRISPR screens"/>
</dbReference>
<dbReference type="EvolutionaryTrace" id="P55789"/>
<dbReference type="GeneWiki" id="GFER"/>
<dbReference type="GenomeRNAi" id="2671"/>
<dbReference type="Pharos" id="P55789">
    <property type="development level" value="Tchem"/>
</dbReference>
<dbReference type="PRO" id="PR:P55789"/>
<dbReference type="Proteomes" id="UP000005640">
    <property type="component" value="Chromosome 16"/>
</dbReference>
<dbReference type="RNAct" id="P55789">
    <property type="molecule type" value="protein"/>
</dbReference>
<dbReference type="Bgee" id="ENSG00000127554">
    <property type="expression patterns" value="Expressed in vena cava and 130 other cell types or tissues"/>
</dbReference>
<dbReference type="ExpressionAtlas" id="P55789">
    <property type="expression patterns" value="baseline and differential"/>
</dbReference>
<dbReference type="GO" id="GO:0005829">
    <property type="term" value="C:cytosol"/>
    <property type="evidence" value="ECO:0000314"/>
    <property type="project" value="HPA"/>
</dbReference>
<dbReference type="GO" id="GO:0005576">
    <property type="term" value="C:extracellular region"/>
    <property type="evidence" value="ECO:0007669"/>
    <property type="project" value="UniProtKB-SubCell"/>
</dbReference>
<dbReference type="GO" id="GO:0005758">
    <property type="term" value="C:mitochondrial intermembrane space"/>
    <property type="evidence" value="ECO:0007669"/>
    <property type="project" value="UniProtKB-SubCell"/>
</dbReference>
<dbReference type="GO" id="GO:0005739">
    <property type="term" value="C:mitochondrion"/>
    <property type="evidence" value="ECO:0000314"/>
    <property type="project" value="HPA"/>
</dbReference>
<dbReference type="GO" id="GO:0050660">
    <property type="term" value="F:flavin adenine dinucleotide binding"/>
    <property type="evidence" value="ECO:0000314"/>
    <property type="project" value="UniProtKB"/>
</dbReference>
<dbReference type="GO" id="GO:0016971">
    <property type="term" value="F:flavin-dependent sulfhydryl oxidase activity"/>
    <property type="evidence" value="ECO:0000318"/>
    <property type="project" value="GO_Central"/>
</dbReference>
<dbReference type="GO" id="GO:0008083">
    <property type="term" value="F:growth factor activity"/>
    <property type="evidence" value="ECO:0007669"/>
    <property type="project" value="UniProtKB-KW"/>
</dbReference>
<dbReference type="GO" id="GO:0015035">
    <property type="term" value="F:protein-disulfide reductase activity"/>
    <property type="evidence" value="ECO:0000314"/>
    <property type="project" value="UniProtKB"/>
</dbReference>
<dbReference type="GO" id="GO:0001889">
    <property type="term" value="P:liver development"/>
    <property type="evidence" value="ECO:0000318"/>
    <property type="project" value="GO_Central"/>
</dbReference>
<dbReference type="GO" id="GO:0160203">
    <property type="term" value="P:mitochondrial disulfide relay system"/>
    <property type="evidence" value="ECO:0000314"/>
    <property type="project" value="UniProtKB"/>
</dbReference>
<dbReference type="DisProt" id="DP02875"/>
<dbReference type="FunFam" id="1.20.120.310:FF:000003">
    <property type="entry name" value="Sulfhydryl oxidase"/>
    <property type="match status" value="1"/>
</dbReference>
<dbReference type="Gene3D" id="1.20.120.310">
    <property type="entry name" value="ERV/ALR sulfhydryl oxidase domain"/>
    <property type="match status" value="1"/>
</dbReference>
<dbReference type="InterPro" id="IPR039799">
    <property type="entry name" value="ALR/ERV"/>
</dbReference>
<dbReference type="InterPro" id="IPR036774">
    <property type="entry name" value="ERV/ALR_sulphydryl_oxid_sf"/>
</dbReference>
<dbReference type="InterPro" id="IPR017905">
    <property type="entry name" value="ERV/ALR_sulphydryl_oxidase"/>
</dbReference>
<dbReference type="PANTHER" id="PTHR12645">
    <property type="entry name" value="ALR/ERV"/>
    <property type="match status" value="1"/>
</dbReference>
<dbReference type="PANTHER" id="PTHR12645:SF0">
    <property type="entry name" value="FAD-LINKED SULFHYDRYL OXIDASE ALR"/>
    <property type="match status" value="1"/>
</dbReference>
<dbReference type="Pfam" id="PF04777">
    <property type="entry name" value="Evr1_Alr"/>
    <property type="match status" value="1"/>
</dbReference>
<dbReference type="SUPFAM" id="SSF69000">
    <property type="entry name" value="FAD-dependent thiol oxidase"/>
    <property type="match status" value="1"/>
</dbReference>
<dbReference type="PROSITE" id="PS51324">
    <property type="entry name" value="ERV_ALR"/>
    <property type="match status" value="1"/>
</dbReference>
<keyword id="KW-0002">3D-structure</keyword>
<keyword id="KW-0025">Alternative splicing</keyword>
<keyword id="KW-0898">Cataract</keyword>
<keyword id="KW-0963">Cytoplasm</keyword>
<keyword id="KW-0209">Deafness</keyword>
<keyword id="KW-0225">Disease variant</keyword>
<keyword id="KW-1015">Disulfide bond</keyword>
<keyword id="KW-0274">FAD</keyword>
<keyword id="KW-0285">Flavoprotein</keyword>
<keyword id="KW-0339">Growth factor</keyword>
<keyword id="KW-0496">Mitochondrion</keyword>
<keyword id="KW-0560">Oxidoreductase</keyword>
<keyword id="KW-0597">Phosphoprotein</keyword>
<keyword id="KW-1274">Primary mitochondrial disease</keyword>
<keyword id="KW-1267">Proteomics identification</keyword>
<keyword id="KW-1185">Reference proteome</keyword>
<keyword id="KW-0964">Secreted</keyword>
<evidence type="ECO:0000255" key="1">
    <source>
        <dbReference type="PROSITE-ProRule" id="PRU00654"/>
    </source>
</evidence>
<evidence type="ECO:0000256" key="2">
    <source>
        <dbReference type="SAM" id="MobiDB-lite"/>
    </source>
</evidence>
<evidence type="ECO:0000269" key="3">
    <source>
    </source>
</evidence>
<evidence type="ECO:0000269" key="4">
    <source>
    </source>
</evidence>
<evidence type="ECO:0000269" key="5">
    <source>
    </source>
</evidence>
<evidence type="ECO:0000269" key="6">
    <source>
    </source>
</evidence>
<evidence type="ECO:0000269" key="7">
    <source>
    </source>
</evidence>
<evidence type="ECO:0000269" key="8">
    <source>
    </source>
</evidence>
<evidence type="ECO:0000269" key="9">
    <source>
    </source>
</evidence>
<evidence type="ECO:0000269" key="10">
    <source>
    </source>
</evidence>
<evidence type="ECO:0000303" key="11">
    <source ref="2"/>
</evidence>
<evidence type="ECO:0000303" key="12">
    <source ref="4"/>
</evidence>
<evidence type="ECO:0000305" key="13"/>
<evidence type="ECO:0007744" key="14">
    <source>
    </source>
</evidence>
<evidence type="ECO:0007829" key="15">
    <source>
        <dbReference type="PDB" id="3U5S"/>
    </source>
</evidence>
<reference key="1">
    <citation type="submission" date="1999-09" db="EMBL/GenBank/DDBJ databases">
        <title>Genomic structure, chromosomal localization, and characterization of a functional promoter for human hepatopoietin (HPO) gene.</title>
        <authorList>
            <person name="Liu M.-M."/>
            <person name="He F.-C."/>
            <person name="Wei H.-D."/>
            <person name="Zhou W.-Q."/>
        </authorList>
    </citation>
    <scope>NUCLEOTIDE SEQUENCE [GENOMIC DNA]</scope>
</reference>
<reference key="2">
    <citation type="submission" date="1999-01" db="EMBL/GenBank/DDBJ databases">
        <title>HERV different transcription sequence.</title>
        <authorList>
            <person name="Li Y."/>
            <person name="Xing G.-C."/>
            <person name="He F.-C."/>
            <person name="Wei H.-D."/>
            <person name="Zhang C.-G."/>
            <person name="Zhu L."/>
            <person name="Yu Y.-T."/>
        </authorList>
    </citation>
    <scope>NUCLEOTIDE SEQUENCE [MRNA] (ISOFORM 2)</scope>
    <source>
        <tissue>Liver</tissue>
    </source>
</reference>
<reference key="3">
    <citation type="submission" date="2000-09" db="EMBL/GenBank/DDBJ databases">
        <title>Isolation of human HPO cDNA from human liver tissue.</title>
        <authorList>
            <person name="Jun L."/>
            <person name="Wangxiang X."/>
            <person name="Xiaoming Y."/>
        </authorList>
    </citation>
    <scope>NUCLEOTIDE SEQUENCE [MRNA]</scope>
    <source>
        <tissue>Fetal liver</tissue>
    </source>
</reference>
<reference key="4">
    <citation type="submission" date="2004-02" db="EMBL/GenBank/DDBJ databases">
        <title>Human augmenter of liver regeneration/hepatopoietin gene open reading frame sequence.</title>
        <authorList>
            <person name="Dai W.-J."/>
            <person name="Jiang H.-C."/>
        </authorList>
    </citation>
    <scope>NUCLEOTIDE SEQUENCE [MRNA] (ISOFORM 2)</scope>
</reference>
<reference key="5">
    <citation type="journal article" date="2004" name="Nature">
        <title>The sequence and analysis of duplication-rich human chromosome 16.</title>
        <authorList>
            <person name="Martin J."/>
            <person name="Han C."/>
            <person name="Gordon L.A."/>
            <person name="Terry A."/>
            <person name="Prabhakar S."/>
            <person name="She X."/>
            <person name="Xie G."/>
            <person name="Hellsten U."/>
            <person name="Chan Y.M."/>
            <person name="Altherr M."/>
            <person name="Couronne O."/>
            <person name="Aerts A."/>
            <person name="Bajorek E."/>
            <person name="Black S."/>
            <person name="Blumer H."/>
            <person name="Branscomb E."/>
            <person name="Brown N.C."/>
            <person name="Bruno W.J."/>
            <person name="Buckingham J.M."/>
            <person name="Callen D.F."/>
            <person name="Campbell C.S."/>
            <person name="Campbell M.L."/>
            <person name="Campbell E.W."/>
            <person name="Caoile C."/>
            <person name="Challacombe J.F."/>
            <person name="Chasteen L.A."/>
            <person name="Chertkov O."/>
            <person name="Chi H.C."/>
            <person name="Christensen M."/>
            <person name="Clark L.M."/>
            <person name="Cohn J.D."/>
            <person name="Denys M."/>
            <person name="Detter J.C."/>
            <person name="Dickson M."/>
            <person name="Dimitrijevic-Bussod M."/>
            <person name="Escobar J."/>
            <person name="Fawcett J.J."/>
            <person name="Flowers D."/>
            <person name="Fotopulos D."/>
            <person name="Glavina T."/>
            <person name="Gomez M."/>
            <person name="Gonzales E."/>
            <person name="Goodstein D."/>
            <person name="Goodwin L.A."/>
            <person name="Grady D.L."/>
            <person name="Grigoriev I."/>
            <person name="Groza M."/>
            <person name="Hammon N."/>
            <person name="Hawkins T."/>
            <person name="Haydu L."/>
            <person name="Hildebrand C.E."/>
            <person name="Huang W."/>
            <person name="Israni S."/>
            <person name="Jett J."/>
            <person name="Jewett P.B."/>
            <person name="Kadner K."/>
            <person name="Kimball H."/>
            <person name="Kobayashi A."/>
            <person name="Krawczyk M.-C."/>
            <person name="Leyba T."/>
            <person name="Longmire J.L."/>
            <person name="Lopez F."/>
            <person name="Lou Y."/>
            <person name="Lowry S."/>
            <person name="Ludeman T."/>
            <person name="Manohar C.F."/>
            <person name="Mark G.A."/>
            <person name="McMurray K.L."/>
            <person name="Meincke L.J."/>
            <person name="Morgan J."/>
            <person name="Moyzis R.K."/>
            <person name="Mundt M.O."/>
            <person name="Munk A.C."/>
            <person name="Nandkeshwar R.D."/>
            <person name="Pitluck S."/>
            <person name="Pollard M."/>
            <person name="Predki P."/>
            <person name="Parson-Quintana B."/>
            <person name="Ramirez L."/>
            <person name="Rash S."/>
            <person name="Retterer J."/>
            <person name="Ricke D.O."/>
            <person name="Robinson D.L."/>
            <person name="Rodriguez A."/>
            <person name="Salamov A."/>
            <person name="Saunders E.H."/>
            <person name="Scott D."/>
            <person name="Shough T."/>
            <person name="Stallings R.L."/>
            <person name="Stalvey M."/>
            <person name="Sutherland R.D."/>
            <person name="Tapia R."/>
            <person name="Tesmer J.G."/>
            <person name="Thayer N."/>
            <person name="Thompson L.S."/>
            <person name="Tice H."/>
            <person name="Torney D.C."/>
            <person name="Tran-Gyamfi M."/>
            <person name="Tsai M."/>
            <person name="Ulanovsky L.E."/>
            <person name="Ustaszewska A."/>
            <person name="Vo N."/>
            <person name="White P.S."/>
            <person name="Williams A.L."/>
            <person name="Wills P.L."/>
            <person name="Wu J.-R."/>
            <person name="Wu K."/>
            <person name="Yang J."/>
            <person name="DeJong P."/>
            <person name="Bruce D."/>
            <person name="Doggett N.A."/>
            <person name="Deaven L."/>
            <person name="Schmutz J."/>
            <person name="Grimwood J."/>
            <person name="Richardson P."/>
            <person name="Rokhsar D.S."/>
            <person name="Eichler E.E."/>
            <person name="Gilna P."/>
            <person name="Lucas S.M."/>
            <person name="Myers R.M."/>
            <person name="Rubin E.M."/>
            <person name="Pennacchio L.A."/>
        </authorList>
    </citation>
    <scope>NUCLEOTIDE SEQUENCE [LARGE SCALE GENOMIC DNA]</scope>
</reference>
<reference key="6">
    <citation type="journal article" date="2004" name="Genome Res.">
        <title>The status, quality, and expansion of the NIH full-length cDNA project: the Mammalian Gene Collection (MGC).</title>
        <authorList>
            <consortium name="The MGC Project Team"/>
        </authorList>
    </citation>
    <scope>NUCLEOTIDE SEQUENCE [LARGE SCALE MRNA] OF 2-205</scope>
    <source>
        <tissue>Placenta</tissue>
        <tissue>Skin</tissue>
    </source>
</reference>
<reference key="7">
    <citation type="journal article" date="2000" name="Zhonghua Gan Zang Bing Za Zhi">
        <title>Cloning and sequence analysis of human genomic DNA of augmenter of liver regeneration hepatitis.</title>
        <authorList>
            <person name="Cheng J."/>
            <person name="Zhong Y."/>
        </authorList>
    </citation>
    <scope>NUCLEOTIDE SEQUENCE [GENOMIC DNA] OF 29-205</scope>
</reference>
<reference key="8">
    <citation type="journal article" date="1995" name="Genomics">
        <title>A new human gene located in the PKD1 region of chromosome 16 is a functional homologue to ERV1 of yeast.</title>
        <authorList>
            <person name="Lisowsky T."/>
            <person name="Weinstat-Saslow D.L."/>
            <person name="Barton N."/>
            <person name="Reeders S.T."/>
            <person name="Schneider M.C."/>
        </authorList>
    </citation>
    <scope>NUCLEOTIDE SEQUENCE [MRNA] OF 30-205</scope>
    <source>
        <tissue>Renal cyst lining cell</tissue>
    </source>
</reference>
<reference key="9">
    <citation type="journal article" date="2002" name="Eur. J. Biochem.">
        <title>Identification of hepatopoietin dimerization, its interacting regions and alternative splicing of its transcription.</title>
        <authorList>
            <person name="Li Y."/>
            <person name="Wei K."/>
            <person name="Lu C."/>
            <person name="Li Y."/>
            <person name="Li M."/>
            <person name="Xing G."/>
            <person name="Wei H."/>
            <person name="Wang Q."/>
            <person name="Chen J."/>
            <person name="Wu C."/>
            <person name="Chen H."/>
            <person name="Yang S."/>
            <person name="He F."/>
        </authorList>
    </citation>
    <scope>ALTERNATIVE SPLICING</scope>
    <scope>SUBUNIT</scope>
</reference>
<reference key="10">
    <citation type="journal article" date="2008" name="Mol. Cell">
        <title>Kinase-selective enrichment enables quantitative phosphoproteomics of the kinome across the cell cycle.</title>
        <authorList>
            <person name="Daub H."/>
            <person name="Olsen J.V."/>
            <person name="Bairlein M."/>
            <person name="Gnad F."/>
            <person name="Oppermann F.S."/>
            <person name="Korner R."/>
            <person name="Greff Z."/>
            <person name="Keri G."/>
            <person name="Stemmann O."/>
            <person name="Mann M."/>
        </authorList>
    </citation>
    <scope>IDENTIFICATION BY MASS SPECTROMETRY [LARGE SCALE ANALYSIS]</scope>
    <source>
        <tissue>Cervix carcinoma</tissue>
    </source>
</reference>
<reference key="11">
    <citation type="journal article" date="2008" name="Proc. Natl. Acad. Sci. U.S.A.">
        <title>A quantitative atlas of mitotic phosphorylation.</title>
        <authorList>
            <person name="Dephoure N."/>
            <person name="Zhou C."/>
            <person name="Villen J."/>
            <person name="Beausoleil S.A."/>
            <person name="Bakalarski C.E."/>
            <person name="Elledge S.J."/>
            <person name="Gygi S.P."/>
        </authorList>
    </citation>
    <scope>PHOSPHORYLATION [LARGE SCALE ANALYSIS] AT SER-59</scope>
    <scope>IDENTIFICATION BY MASS SPECTROMETRY [LARGE SCALE ANALYSIS]</scope>
    <source>
        <tissue>Cervix carcinoma</tissue>
    </source>
</reference>
<reference key="12">
    <citation type="journal article" date="2009" name="Biochemistry">
        <title>Augmenter of liver regeneration: substrate specificity of a flavin-dependent oxidoreductase from the mitochondrial intermembrane space.</title>
        <authorList>
            <person name="Daithankar V.N."/>
            <person name="Farrell S.R."/>
            <person name="Thorpe C."/>
        </authorList>
    </citation>
    <scope>FUNCTION</scope>
    <scope>SUBCELLULAR LOCATION</scope>
</reference>
<reference key="13">
    <citation type="journal article" date="2013" name="Mol. Biol. Cell">
        <title>Protein import and oxidative folding in the mitochondrial intermembrane space of intact mammalian cells.</title>
        <authorList>
            <person name="Fischer M."/>
            <person name="Horn S."/>
            <person name="Belkacemi A."/>
            <person name="Kojer K."/>
            <person name="Petrungaro C."/>
            <person name="Habich M."/>
            <person name="Ali M."/>
            <person name="Kuettner V."/>
            <person name="Bien M."/>
            <person name="Kauff F."/>
            <person name="Dengjel J."/>
            <person name="Herrmann J.M."/>
            <person name="Riemer J."/>
        </authorList>
    </citation>
    <scope>FUNCTION</scope>
    <scope>SUBCELLULAR LOCATION</scope>
    <scope>INTERACTION WITH CHCHD4</scope>
</reference>
<reference key="14">
    <citation type="journal article" date="2013" name="Traffic">
        <title>Disulfide bond formation: sulfhydryl oxidase ALR controls mitochondrial biogenesis of human MIA40.</title>
        <authorList>
            <person name="Sztolsztener M.E."/>
            <person name="Brewinska A."/>
            <person name="Guiard B."/>
            <person name="Chacinska A."/>
        </authorList>
    </citation>
    <scope>FUNCTION</scope>
    <scope>SUBCELLULAR LOCATION</scope>
</reference>
<reference key="15">
    <citation type="journal article" date="2014" name="J. Proteomics">
        <title>An enzyme assisted RP-RPLC approach for in-depth analysis of human liver phosphoproteome.</title>
        <authorList>
            <person name="Bian Y."/>
            <person name="Song C."/>
            <person name="Cheng K."/>
            <person name="Dong M."/>
            <person name="Wang F."/>
            <person name="Huang J."/>
            <person name="Sun D."/>
            <person name="Wang L."/>
            <person name="Ye M."/>
            <person name="Zou H."/>
        </authorList>
    </citation>
    <scope>IDENTIFICATION BY MASS SPECTROMETRY [LARGE SCALE ANALYSIS]</scope>
    <source>
        <tissue>Liver</tissue>
    </source>
</reference>
<reference key="16">
    <citation type="journal article" date="2010" name="Biochemistry">
        <title>Structure of the human sulfhydryl oxidase augmenter of liver regeneration and characterization of a human mutation causing an autosomal recessive myopathy.</title>
        <authorList>
            <person name="Daithankar V.N."/>
            <person name="Schaefer S.A."/>
            <person name="Dong M."/>
            <person name="Bahnson B.J."/>
            <person name="Thorpe C."/>
        </authorList>
    </citation>
    <scope>X-RAY CRYSTALLOGRAPHY (1.85 ANGSTROMS) OF 81-205</scope>
    <scope>CATALYTIC ACTIVITY</scope>
    <scope>FUNCTION</scope>
    <scope>SUBUNIT</scope>
    <scope>DISULFIDE BONDS</scope>
    <scope>FAD-BINDING SITES</scope>
    <scope>CHARACTERIZATION OF VARIANT MPMCD HIS-194</scope>
</reference>
<reference key="17">
    <citation type="journal article" date="2011" name="Proc. Natl. Acad. Sci. U.S.A.">
        <title>Molecular recognition and substrate mimicry drive the electron-transfer process between MIA40 and ALR.</title>
        <authorList>
            <person name="Banci L."/>
            <person name="Bertini I."/>
            <person name="Calderone V."/>
            <person name="Cefaro C."/>
            <person name="Ciofi-Baffoni S."/>
            <person name="Gallo A."/>
            <person name="Kallergi E."/>
            <person name="Lionaki E."/>
            <person name="Pozidis C."/>
            <person name="Tokatlidis K."/>
        </authorList>
    </citation>
    <scope>X-RAY CRYSTALLOGRAPHY (1.9 ANGSTROMS) OF 81-205 IN COMPLEX WITH FAD</scope>
    <scope>FUNCTION</scope>
    <scope>COFACTOR</scope>
    <scope>SUBUNIT</scope>
    <scope>DISULFIDE BONDS</scope>
    <scope>INTERACTION WITH CHCHD4</scope>
</reference>
<reference key="18">
    <citation type="journal article" date="2012" name="J. Am. Chem. Soc.">
        <title>An electron-transfer path through an extended disulfide relay system: the case of the redox protein ALR.</title>
        <authorList>
            <person name="Banci L."/>
            <person name="Bertini I."/>
            <person name="Calderone V."/>
            <person name="Cefaro C."/>
            <person name="Ciofi-Baffoni S."/>
            <person name="Gallo A."/>
            <person name="Tokatlidis K."/>
        </authorList>
    </citation>
    <scope>X-RAY CRYSTALLOGRAPHY (1.95 ANGSTROMS) OF 91-205</scope>
    <scope>FUNCTION</scope>
    <scope>CATALYTIC ACTIVITY</scope>
    <scope>DISULFIDE BONDS</scope>
    <scope>SUBUNIT</scope>
</reference>
<reference key="19">
    <citation type="journal article" date="2009" name="Am. J. Hum. Genet.">
        <title>The mitochondrial disulfide relay system protein GFER is mutated in autosomal-recessive myopathy with cataract and combined respiratory-chain deficiency.</title>
        <authorList>
            <person name="Di Fonzo A."/>
            <person name="Ronchi D."/>
            <person name="Lodi T."/>
            <person name="Fassone E."/>
            <person name="Tigano M."/>
            <person name="Lamperti C."/>
            <person name="Corti S."/>
            <person name="Bordoni A."/>
            <person name="Fortunato F."/>
            <person name="Nizzardo M."/>
            <person name="Napoli L."/>
            <person name="Donadoni C."/>
            <person name="Salani S."/>
            <person name="Saladino F."/>
            <person name="Moggio M."/>
            <person name="Bresolin N."/>
            <person name="Ferrero I."/>
            <person name="Comi G.P."/>
        </authorList>
    </citation>
    <scope>VARIANT MPMCD HIS-194</scope>
    <scope>CHARACTERIZATION OF VARIANT MPMCD HIS-194</scope>
    <scope>TISSUE SPECIFICITY</scope>
</reference>
<proteinExistence type="evidence at protein level"/>
<accession>P55789</accession>
<accession>Q53YM6</accession>
<accession>Q8TAH6</accession>
<accession>Q9H290</accession>
<accession>Q9UK40</accession>
<organism>
    <name type="scientific">Homo sapiens</name>
    <name type="common">Human</name>
    <dbReference type="NCBI Taxonomy" id="9606"/>
    <lineage>
        <taxon>Eukaryota</taxon>
        <taxon>Metazoa</taxon>
        <taxon>Chordata</taxon>
        <taxon>Craniata</taxon>
        <taxon>Vertebrata</taxon>
        <taxon>Euteleostomi</taxon>
        <taxon>Mammalia</taxon>
        <taxon>Eutheria</taxon>
        <taxon>Euarchontoglires</taxon>
        <taxon>Primates</taxon>
        <taxon>Haplorrhini</taxon>
        <taxon>Catarrhini</taxon>
        <taxon>Hominidae</taxon>
        <taxon>Homo</taxon>
    </lineage>
</organism>